<proteinExistence type="inferred from homology"/>
<protein>
    <recommendedName>
        <fullName evidence="1">Cytochrome b559 subunit beta</fullName>
    </recommendedName>
    <alternativeName>
        <fullName evidence="1">PSII reaction center subunit VI</fullName>
    </alternativeName>
</protein>
<organism>
    <name type="scientific">Ipomoea wrightii</name>
    <name type="common">Wright's morning glory</name>
    <dbReference type="NCBI Taxonomy" id="89666"/>
    <lineage>
        <taxon>Eukaryota</taxon>
        <taxon>Viridiplantae</taxon>
        <taxon>Streptophyta</taxon>
        <taxon>Embryophyta</taxon>
        <taxon>Tracheophyta</taxon>
        <taxon>Spermatophyta</taxon>
        <taxon>Magnoliopsida</taxon>
        <taxon>eudicotyledons</taxon>
        <taxon>Gunneridae</taxon>
        <taxon>Pentapetalae</taxon>
        <taxon>asterids</taxon>
        <taxon>lamiids</taxon>
        <taxon>Solanales</taxon>
        <taxon>Convolvulaceae</taxon>
        <taxon>Ipomoeeae</taxon>
        <taxon>Ipomoea</taxon>
    </lineage>
</organism>
<feature type="chain" id="PRO_0000200410" description="Cytochrome b559 subunit beta">
    <location>
        <begin position="1"/>
        <end position="39"/>
    </location>
</feature>
<feature type="transmembrane region" description="Helical" evidence="1">
    <location>
        <begin position="14"/>
        <end position="30"/>
    </location>
</feature>
<feature type="binding site" description="axial binding residue" evidence="1">
    <location>
        <position position="18"/>
    </location>
    <ligand>
        <name>heme</name>
        <dbReference type="ChEBI" id="CHEBI:30413"/>
        <note>ligand shared with alpha subunit</note>
    </ligand>
    <ligandPart>
        <name>Fe</name>
        <dbReference type="ChEBI" id="CHEBI:18248"/>
    </ligandPart>
</feature>
<accession>Q7H8L1</accession>
<sequence length="39" mass="4484">MTIDRTYPIFTVRWLAVHGLAVPTVFFLGSISAMQFIQR</sequence>
<reference key="1">
    <citation type="journal article" date="2002" name="Am. J. Bot.">
        <title>Monophyly of the Convolvulaceae and circumscription of their major lineages based on DNA sequences of multiple chloroplast loci.</title>
        <authorList>
            <person name="Stefanovic S."/>
            <person name="Krueger L."/>
            <person name="Olmstead R.G."/>
        </authorList>
        <dbReference type="AGRICOLA" id="IND23320510"/>
    </citation>
    <scope>NUCLEOTIDE SEQUENCE [GENOMIC DNA]</scope>
</reference>
<comment type="function">
    <text evidence="1">This b-type cytochrome is tightly associated with the reaction center of photosystem II (PSII). PSII is a light-driven water:plastoquinone oxidoreductase that uses light energy to abstract electrons from H(2)O, generating O(2) and a proton gradient subsequently used for ATP formation. It consists of a core antenna complex that captures photons, and an electron transfer chain that converts photonic excitation into a charge separation.</text>
</comment>
<comment type="cofactor">
    <cofactor evidence="1">
        <name>heme b</name>
        <dbReference type="ChEBI" id="CHEBI:60344"/>
    </cofactor>
    <text evidence="1">With its partner (PsbE) binds heme. PSII binds additional chlorophylls, carotenoids and specific lipids.</text>
</comment>
<comment type="subunit">
    <text evidence="1">Heterodimer of an alpha subunit and a beta subunit. PSII is composed of 1 copy each of membrane proteins PsbA, PsbB, PsbC, PsbD, PsbE, PsbF, PsbH, PsbI, PsbJ, PsbK, PsbL, PsbM, PsbT, PsbX, PsbY, PsbZ, Psb30/Ycf12, at least 3 peripheral proteins of the oxygen-evolving complex and a large number of cofactors. It forms dimeric complexes.</text>
</comment>
<comment type="subcellular location">
    <subcellularLocation>
        <location evidence="1">Plastid</location>
        <location evidence="1">Chloroplast thylakoid membrane</location>
        <topology evidence="1">Single-pass membrane protein</topology>
    </subcellularLocation>
</comment>
<comment type="similarity">
    <text evidence="1">Belongs to the PsbE/PsbF family.</text>
</comment>
<dbReference type="EMBL" id="AY100855">
    <property type="protein sequence ID" value="AAM55542.1"/>
    <property type="molecule type" value="Genomic_DNA"/>
</dbReference>
<dbReference type="SMR" id="Q7H8L1"/>
<dbReference type="GO" id="GO:0009535">
    <property type="term" value="C:chloroplast thylakoid membrane"/>
    <property type="evidence" value="ECO:0007669"/>
    <property type="project" value="UniProtKB-SubCell"/>
</dbReference>
<dbReference type="GO" id="GO:0009539">
    <property type="term" value="C:photosystem II reaction center"/>
    <property type="evidence" value="ECO:0007669"/>
    <property type="project" value="InterPro"/>
</dbReference>
<dbReference type="GO" id="GO:0009055">
    <property type="term" value="F:electron transfer activity"/>
    <property type="evidence" value="ECO:0007669"/>
    <property type="project" value="UniProtKB-UniRule"/>
</dbReference>
<dbReference type="GO" id="GO:0020037">
    <property type="term" value="F:heme binding"/>
    <property type="evidence" value="ECO:0007669"/>
    <property type="project" value="InterPro"/>
</dbReference>
<dbReference type="GO" id="GO:0005506">
    <property type="term" value="F:iron ion binding"/>
    <property type="evidence" value="ECO:0007669"/>
    <property type="project" value="UniProtKB-UniRule"/>
</dbReference>
<dbReference type="GO" id="GO:0009767">
    <property type="term" value="P:photosynthetic electron transport chain"/>
    <property type="evidence" value="ECO:0007669"/>
    <property type="project" value="InterPro"/>
</dbReference>
<dbReference type="HAMAP" id="MF_00643">
    <property type="entry name" value="PSII_PsbF"/>
    <property type="match status" value="1"/>
</dbReference>
<dbReference type="InterPro" id="IPR006241">
    <property type="entry name" value="PSII_cyt_b559_bsu"/>
</dbReference>
<dbReference type="InterPro" id="IPR006216">
    <property type="entry name" value="PSII_cyt_b559_CS"/>
</dbReference>
<dbReference type="InterPro" id="IPR013081">
    <property type="entry name" value="PSII_cyt_b559_N"/>
</dbReference>
<dbReference type="NCBIfam" id="TIGR01333">
    <property type="entry name" value="cyt_b559_beta"/>
    <property type="match status" value="1"/>
</dbReference>
<dbReference type="Pfam" id="PF00283">
    <property type="entry name" value="Cytochrom_B559"/>
    <property type="match status" value="1"/>
</dbReference>
<dbReference type="PIRSF" id="PIRSF000037">
    <property type="entry name" value="PsbF"/>
    <property type="match status" value="1"/>
</dbReference>
<dbReference type="SUPFAM" id="SSF161045">
    <property type="entry name" value="Cytochrome b559 subunits"/>
    <property type="match status" value="1"/>
</dbReference>
<dbReference type="PROSITE" id="PS00537">
    <property type="entry name" value="CYTOCHROME_B559"/>
    <property type="match status" value="1"/>
</dbReference>
<evidence type="ECO:0000255" key="1">
    <source>
        <dbReference type="HAMAP-Rule" id="MF_00643"/>
    </source>
</evidence>
<geneLocation type="chloroplast"/>
<gene>
    <name evidence="1" type="primary">psbF</name>
</gene>
<keyword id="KW-0150">Chloroplast</keyword>
<keyword id="KW-0249">Electron transport</keyword>
<keyword id="KW-0349">Heme</keyword>
<keyword id="KW-0408">Iron</keyword>
<keyword id="KW-0472">Membrane</keyword>
<keyword id="KW-0479">Metal-binding</keyword>
<keyword id="KW-0602">Photosynthesis</keyword>
<keyword id="KW-0604">Photosystem II</keyword>
<keyword id="KW-0934">Plastid</keyword>
<keyword id="KW-0793">Thylakoid</keyword>
<keyword id="KW-0812">Transmembrane</keyword>
<keyword id="KW-1133">Transmembrane helix</keyword>
<keyword id="KW-0813">Transport</keyword>
<name>PSBF_IPOWR</name>